<feature type="chain" id="PRO_0000046164" description="Copper-exporting P-type ATPase">
    <location>
        <begin position="1"/>
        <end position="780"/>
    </location>
</feature>
<feature type="transmembrane region" description="Helical" evidence="3">
    <location>
        <begin position="89"/>
        <end position="109"/>
    </location>
</feature>
<feature type="transmembrane region" description="Helical" evidence="3">
    <location>
        <begin position="114"/>
        <end position="134"/>
    </location>
</feature>
<feature type="transmembrane region" description="Helical" evidence="3">
    <location>
        <begin position="153"/>
        <end position="173"/>
    </location>
</feature>
<feature type="transmembrane region" description="Helical" evidence="3">
    <location>
        <begin position="185"/>
        <end position="205"/>
    </location>
</feature>
<feature type="transmembrane region" description="Helical" evidence="3">
    <location>
        <begin position="348"/>
        <end position="368"/>
    </location>
</feature>
<feature type="transmembrane region" description="Helical" evidence="3">
    <location>
        <begin position="374"/>
        <end position="394"/>
    </location>
</feature>
<feature type="transmembrane region" description="Helical" evidence="3">
    <location>
        <begin position="680"/>
        <end position="698"/>
    </location>
</feature>
<feature type="transmembrane region" description="Helical" evidence="3">
    <location>
        <begin position="704"/>
        <end position="722"/>
    </location>
</feature>
<feature type="domain" description="HMA" evidence="4">
    <location>
        <begin position="2"/>
        <end position="67"/>
    </location>
</feature>
<feature type="active site" description="4-aspartylphosphate intermediate" evidence="2">
    <location>
        <position position="430"/>
    </location>
</feature>
<feature type="binding site" evidence="4">
    <location>
        <position position="13"/>
    </location>
    <ligand>
        <name>Cu(+)</name>
        <dbReference type="ChEBI" id="CHEBI:49552"/>
    </ligand>
</feature>
<feature type="binding site" evidence="4">
    <location>
        <position position="16"/>
    </location>
    <ligand>
        <name>Cu(+)</name>
        <dbReference type="ChEBI" id="CHEBI:49552"/>
    </ligand>
</feature>
<organism>
    <name type="scientific">Mycobacterium leprae (strain TN)</name>
    <dbReference type="NCBI Taxonomy" id="272631"/>
    <lineage>
        <taxon>Bacteria</taxon>
        <taxon>Bacillati</taxon>
        <taxon>Actinomycetota</taxon>
        <taxon>Actinomycetes</taxon>
        <taxon>Mycobacteriales</taxon>
        <taxon>Mycobacteriaceae</taxon>
        <taxon>Mycobacterium</taxon>
    </lineage>
</organism>
<protein>
    <recommendedName>
        <fullName evidence="1">Copper-exporting P-type ATPase</fullName>
        <ecNumber evidence="1">7.2.2.8</ecNumber>
    </recommendedName>
    <alternativeName>
        <fullName>Copper-exporting P-type ATPase A</fullName>
    </alternativeName>
</protein>
<comment type="function">
    <text evidence="1">Involved in copper export.</text>
</comment>
<comment type="catalytic activity">
    <reaction evidence="1">
        <text>Cu(+)(in) + ATP + H2O = Cu(+)(out) + ADP + phosphate + H(+)</text>
        <dbReference type="Rhea" id="RHEA:25792"/>
        <dbReference type="ChEBI" id="CHEBI:15377"/>
        <dbReference type="ChEBI" id="CHEBI:15378"/>
        <dbReference type="ChEBI" id="CHEBI:30616"/>
        <dbReference type="ChEBI" id="CHEBI:43474"/>
        <dbReference type="ChEBI" id="CHEBI:49552"/>
        <dbReference type="ChEBI" id="CHEBI:456216"/>
        <dbReference type="EC" id="7.2.2.8"/>
    </reaction>
</comment>
<comment type="subcellular location">
    <subcellularLocation>
        <location evidence="1">Cell membrane</location>
        <topology evidence="3">Multi-pass membrane protein</topology>
    </subcellularLocation>
</comment>
<comment type="similarity">
    <text evidence="5">Belongs to the cation transport ATPase (P-type) (TC 3.A.3) family. Type IB subfamily.</text>
</comment>
<comment type="sequence caution" evidence="5">
    <conflict type="frameshift">
        <sequence resource="EMBL-CDS" id="CAA86358"/>
    </conflict>
</comment>
<comment type="sequence caution" evidence="5">
    <conflict type="frameshift">
        <sequence resource="EMBL-CDS" id="CAC30942"/>
    </conflict>
</comment>
<dbReference type="EC" id="7.2.2.8" evidence="1"/>
<dbReference type="EMBL" id="Z46257">
    <property type="protein sequence ID" value="CAA86358.1"/>
    <property type="status" value="ALT_FRAME"/>
    <property type="molecule type" value="Genomic_DNA"/>
</dbReference>
<dbReference type="EMBL" id="AL583924">
    <property type="protein sequence ID" value="CAC30942.1"/>
    <property type="status" value="ALT_FRAME"/>
    <property type="molecule type" value="Genomic_DNA"/>
</dbReference>
<dbReference type="PIR" id="F87157">
    <property type="entry name" value="F87157"/>
</dbReference>
<dbReference type="PIR" id="S77652">
    <property type="entry name" value="S77652"/>
</dbReference>
<dbReference type="SMR" id="P46839"/>
<dbReference type="STRING" id="272631.gene:17575839"/>
<dbReference type="KEGG" id="mle:ML1987"/>
<dbReference type="Leproma" id="ML1987"/>
<dbReference type="eggNOG" id="COG2217">
    <property type="taxonomic scope" value="Bacteria"/>
</dbReference>
<dbReference type="HOGENOM" id="CLU_001771_0_3_11"/>
<dbReference type="Proteomes" id="UP000000806">
    <property type="component" value="Chromosome"/>
</dbReference>
<dbReference type="GO" id="GO:0005886">
    <property type="term" value="C:plasma membrane"/>
    <property type="evidence" value="ECO:0007669"/>
    <property type="project" value="UniProtKB-SubCell"/>
</dbReference>
<dbReference type="GO" id="GO:0005524">
    <property type="term" value="F:ATP binding"/>
    <property type="evidence" value="ECO:0007669"/>
    <property type="project" value="UniProtKB-KW"/>
</dbReference>
<dbReference type="GO" id="GO:0016887">
    <property type="term" value="F:ATP hydrolysis activity"/>
    <property type="evidence" value="ECO:0007669"/>
    <property type="project" value="InterPro"/>
</dbReference>
<dbReference type="GO" id="GO:0005507">
    <property type="term" value="F:copper ion binding"/>
    <property type="evidence" value="ECO:0007669"/>
    <property type="project" value="TreeGrafter"/>
</dbReference>
<dbReference type="GO" id="GO:0043682">
    <property type="term" value="F:P-type divalent copper transporter activity"/>
    <property type="evidence" value="ECO:0007669"/>
    <property type="project" value="TreeGrafter"/>
</dbReference>
<dbReference type="GO" id="GO:0140581">
    <property type="term" value="F:P-type monovalent copper transporter activity"/>
    <property type="evidence" value="ECO:0007669"/>
    <property type="project" value="UniProtKB-EC"/>
</dbReference>
<dbReference type="GO" id="GO:0055070">
    <property type="term" value="P:copper ion homeostasis"/>
    <property type="evidence" value="ECO:0007669"/>
    <property type="project" value="TreeGrafter"/>
</dbReference>
<dbReference type="CDD" id="cd02094">
    <property type="entry name" value="P-type_ATPase_Cu-like"/>
    <property type="match status" value="1"/>
</dbReference>
<dbReference type="FunFam" id="2.70.150.10:FF:000002">
    <property type="entry name" value="Copper-transporting ATPase 1, putative"/>
    <property type="match status" value="1"/>
</dbReference>
<dbReference type="Gene3D" id="3.40.1110.10">
    <property type="entry name" value="Calcium-transporting ATPase, cytoplasmic domain N"/>
    <property type="match status" value="1"/>
</dbReference>
<dbReference type="Gene3D" id="2.70.150.10">
    <property type="entry name" value="Calcium-transporting ATPase, cytoplasmic transduction domain A"/>
    <property type="match status" value="1"/>
</dbReference>
<dbReference type="Gene3D" id="3.40.50.1000">
    <property type="entry name" value="HAD superfamily/HAD-like"/>
    <property type="match status" value="1"/>
</dbReference>
<dbReference type="InterPro" id="IPR023299">
    <property type="entry name" value="ATPase_P-typ_cyto_dom_N"/>
</dbReference>
<dbReference type="InterPro" id="IPR018303">
    <property type="entry name" value="ATPase_P-typ_P_site"/>
</dbReference>
<dbReference type="InterPro" id="IPR023298">
    <property type="entry name" value="ATPase_P-typ_TM_dom_sf"/>
</dbReference>
<dbReference type="InterPro" id="IPR008250">
    <property type="entry name" value="ATPase_P-typ_transduc_dom_A_sf"/>
</dbReference>
<dbReference type="InterPro" id="IPR000579">
    <property type="entry name" value="Cation-trans_P-type_ATPase_A/B"/>
</dbReference>
<dbReference type="InterPro" id="IPR036412">
    <property type="entry name" value="HAD-like_sf"/>
</dbReference>
<dbReference type="InterPro" id="IPR023214">
    <property type="entry name" value="HAD_sf"/>
</dbReference>
<dbReference type="InterPro" id="IPR017969">
    <property type="entry name" value="Heavy-metal-associated_CS"/>
</dbReference>
<dbReference type="InterPro" id="IPR006121">
    <property type="entry name" value="HMA_dom"/>
</dbReference>
<dbReference type="InterPro" id="IPR027256">
    <property type="entry name" value="P-typ_ATPase_IB"/>
</dbReference>
<dbReference type="InterPro" id="IPR001757">
    <property type="entry name" value="P_typ_ATPase"/>
</dbReference>
<dbReference type="InterPro" id="IPR044492">
    <property type="entry name" value="P_typ_ATPase_HD_dom"/>
</dbReference>
<dbReference type="NCBIfam" id="TIGR01511">
    <property type="entry name" value="ATPase-IB1_Cu"/>
    <property type="match status" value="1"/>
</dbReference>
<dbReference type="NCBIfam" id="TIGR01525">
    <property type="entry name" value="ATPase-IB_hvy"/>
    <property type="match status" value="1"/>
</dbReference>
<dbReference type="NCBIfam" id="TIGR01494">
    <property type="entry name" value="ATPase_P-type"/>
    <property type="match status" value="1"/>
</dbReference>
<dbReference type="PANTHER" id="PTHR43520">
    <property type="entry name" value="ATP7, ISOFORM B"/>
    <property type="match status" value="1"/>
</dbReference>
<dbReference type="PANTHER" id="PTHR43520:SF8">
    <property type="entry name" value="P-TYPE CU(+) TRANSPORTER"/>
    <property type="match status" value="1"/>
</dbReference>
<dbReference type="Pfam" id="PF00122">
    <property type="entry name" value="E1-E2_ATPase"/>
    <property type="match status" value="1"/>
</dbReference>
<dbReference type="Pfam" id="PF00702">
    <property type="entry name" value="Hydrolase"/>
    <property type="match status" value="1"/>
</dbReference>
<dbReference type="PRINTS" id="PR00119">
    <property type="entry name" value="CATATPASE"/>
</dbReference>
<dbReference type="PRINTS" id="PR00940">
    <property type="entry name" value="CATPATPASEA"/>
</dbReference>
<dbReference type="SFLD" id="SFLDS00003">
    <property type="entry name" value="Haloacid_Dehalogenase"/>
    <property type="match status" value="1"/>
</dbReference>
<dbReference type="SFLD" id="SFLDF00027">
    <property type="entry name" value="p-type_atpase"/>
    <property type="match status" value="1"/>
</dbReference>
<dbReference type="SUPFAM" id="SSF81653">
    <property type="entry name" value="Calcium ATPase, transduction domain A"/>
    <property type="match status" value="1"/>
</dbReference>
<dbReference type="SUPFAM" id="SSF81665">
    <property type="entry name" value="Calcium ATPase, transmembrane domain M"/>
    <property type="match status" value="1"/>
</dbReference>
<dbReference type="SUPFAM" id="SSF56784">
    <property type="entry name" value="HAD-like"/>
    <property type="match status" value="1"/>
</dbReference>
<dbReference type="PROSITE" id="PS00154">
    <property type="entry name" value="ATPASE_E1_E2"/>
    <property type="match status" value="1"/>
</dbReference>
<dbReference type="PROSITE" id="PS01047">
    <property type="entry name" value="HMA_1"/>
    <property type="match status" value="1"/>
</dbReference>
<dbReference type="PROSITE" id="PS50846">
    <property type="entry name" value="HMA_2"/>
    <property type="match status" value="1"/>
</dbReference>
<accession>P46839</accession>
<accession>Q9CBG9</accession>
<proteinExistence type="inferred from homology"/>
<evidence type="ECO:0000250" key="1">
    <source>
        <dbReference type="UniProtKB" id="P9WPU1"/>
    </source>
</evidence>
<evidence type="ECO:0000250" key="2">
    <source>
        <dbReference type="UniProtKB" id="Q59385"/>
    </source>
</evidence>
<evidence type="ECO:0000255" key="3"/>
<evidence type="ECO:0000255" key="4">
    <source>
        <dbReference type="PROSITE-ProRule" id="PRU00280"/>
    </source>
</evidence>
<evidence type="ECO:0000305" key="5"/>
<name>CTPA_MYCLE</name>
<gene>
    <name type="primary">ctpA</name>
    <name type="ordered locus">ML1987</name>
</gene>
<reference key="1">
    <citation type="journal article" date="1995" name="Mol. Microbiol.">
        <title>The Mycobacterium leprae genome: systematic sequence analysis identifies key catabolic enzymes, ATP-dependent transport systems and a novel polA locus associated with genomic variability.</title>
        <authorList>
            <person name="Fsihi H."/>
            <person name="Cole S.T."/>
        </authorList>
    </citation>
    <scope>NUCLEOTIDE SEQUENCE [GENOMIC DNA]</scope>
</reference>
<reference key="2">
    <citation type="journal article" date="2001" name="Nature">
        <title>Massive gene decay in the leprosy bacillus.</title>
        <authorList>
            <person name="Cole S.T."/>
            <person name="Eiglmeier K."/>
            <person name="Parkhill J."/>
            <person name="James K.D."/>
            <person name="Thomson N.R."/>
            <person name="Wheeler P.R."/>
            <person name="Honore N."/>
            <person name="Garnier T."/>
            <person name="Churcher C.M."/>
            <person name="Harris D.E."/>
            <person name="Mungall K.L."/>
            <person name="Basham D."/>
            <person name="Brown D."/>
            <person name="Chillingworth T."/>
            <person name="Connor R."/>
            <person name="Davies R.M."/>
            <person name="Devlin K."/>
            <person name="Duthoy S."/>
            <person name="Feltwell T."/>
            <person name="Fraser A."/>
            <person name="Hamlin N."/>
            <person name="Holroyd S."/>
            <person name="Hornsby T."/>
            <person name="Jagels K."/>
            <person name="Lacroix C."/>
            <person name="Maclean J."/>
            <person name="Moule S."/>
            <person name="Murphy L.D."/>
            <person name="Oliver K."/>
            <person name="Quail M.A."/>
            <person name="Rajandream M.A."/>
            <person name="Rutherford K.M."/>
            <person name="Rutter S."/>
            <person name="Seeger K."/>
            <person name="Simon S."/>
            <person name="Simmonds M."/>
            <person name="Skelton J."/>
            <person name="Squares R."/>
            <person name="Squares S."/>
            <person name="Stevens K."/>
            <person name="Taylor K."/>
            <person name="Whitehead S."/>
            <person name="Woodward J.R."/>
            <person name="Barrell B.G."/>
        </authorList>
    </citation>
    <scope>NUCLEOTIDE SEQUENCE [LARGE SCALE GENOMIC DNA]</scope>
    <source>
        <strain>TN</strain>
    </source>
</reference>
<sequence>MQRIQLNITGMSCSCCAPNGWNNLPNKLSDFSTLVNSATRVAAINLSEVTQTAEVCEAVRRAALCTDGGEALQRRQADADNARYLLIRLAVAAALFVPLAHLSVMFAVLPSTHFPGWEWMLTALAIPVVTWAAWPFHRVAIHNARYHGASMETLISTGITAATIWSLYTVFGHHQSTEHRGVWRALLGSDAIYFEVAAGITVFVLAGKYYTARAKSHASIALLALAALSAKDAAVLQPDGSEMVIPANELNEQQRFVVRPGQTIAADGLVIDGSATVSMSPITGEAKPVRVNPGAQVIGGTVVLNGRLIVEAAAVGDETQLAGMVRLVEQAQQQNANAQRLADRIASVFVPCVFAVAALTAVGWLIAGSGPDRVFSAAIAVLVIACPCALGLATPTAMMVASGRGAQLGILLKGHESFEATRAVDTVVFDKTGTLTTGQLKVSAVTAAPGWQANEVLQMAATVESASEHAVALAIAASTTHREPVANFRAVPGHGVSGTVAERAVRVGKPSWIASRCNSTTLVTARRNAELRGETAVFVEIDGEQCGVIAVADAVKASAADAVAALHDRGFRTALLTGDNPASAAAVASRIGIDEVIADILPEDKVDVIEQLRDRGHVVAMVGDGINDGPALARADLGMAIGRGTDVAIGAADIILVRDNLDVVPITLDLAAATMRTIKFNMVWAFGYNIAAIPIAAAGLLNPLVAGAAMAFSSFFVVSNSLRLRNFGAILSCGTSRHRTVKRWRCPPPTRLRSTACSPVDASPLRPVAHRTGVKPPTHR</sequence>
<keyword id="KW-0067">ATP-binding</keyword>
<keyword id="KW-1003">Cell membrane</keyword>
<keyword id="KW-0186">Copper</keyword>
<keyword id="KW-0187">Copper transport</keyword>
<keyword id="KW-0406">Ion transport</keyword>
<keyword id="KW-0472">Membrane</keyword>
<keyword id="KW-0479">Metal-binding</keyword>
<keyword id="KW-0547">Nucleotide-binding</keyword>
<keyword id="KW-0597">Phosphoprotein</keyword>
<keyword id="KW-1185">Reference proteome</keyword>
<keyword id="KW-1278">Translocase</keyword>
<keyword id="KW-0812">Transmembrane</keyword>
<keyword id="KW-1133">Transmembrane helix</keyword>
<keyword id="KW-0813">Transport</keyword>